<reference key="1">
    <citation type="journal article" date="2007" name="Proc. Natl. Acad. Sci. U.S.A.">
        <title>Genome and proteome of long-chain alkane degrading Geobacillus thermodenitrificans NG80-2 isolated from a deep-subsurface oil reservoir.</title>
        <authorList>
            <person name="Feng L."/>
            <person name="Wang W."/>
            <person name="Cheng J."/>
            <person name="Ren Y."/>
            <person name="Zhao G."/>
            <person name="Gao C."/>
            <person name="Tang Y."/>
            <person name="Liu X."/>
            <person name="Han W."/>
            <person name="Peng X."/>
            <person name="Liu R."/>
            <person name="Wang L."/>
        </authorList>
    </citation>
    <scope>NUCLEOTIDE SEQUENCE [LARGE SCALE GENOMIC DNA]</scope>
    <source>
        <strain>NG80-2</strain>
    </source>
</reference>
<proteinExistence type="inferred from homology"/>
<feature type="chain" id="PRO_0000340622" description="Sulfate adenylyltransferase">
    <location>
        <begin position="1"/>
        <end position="386"/>
    </location>
</feature>
<dbReference type="EC" id="2.7.7.4" evidence="1"/>
<dbReference type="EMBL" id="CP000557">
    <property type="protein sequence ID" value="ABO65769.1"/>
    <property type="molecule type" value="Genomic_DNA"/>
</dbReference>
<dbReference type="RefSeq" id="WP_008881206.1">
    <property type="nucleotide sequence ID" value="NC_009328.1"/>
</dbReference>
<dbReference type="SMR" id="A4IKB5"/>
<dbReference type="GeneID" id="87622006"/>
<dbReference type="KEGG" id="gtn:GTNG_0387"/>
<dbReference type="eggNOG" id="COG2046">
    <property type="taxonomic scope" value="Bacteria"/>
</dbReference>
<dbReference type="HOGENOM" id="CLU_022950_1_1_9"/>
<dbReference type="UniPathway" id="UPA00140">
    <property type="reaction ID" value="UER00204"/>
</dbReference>
<dbReference type="Proteomes" id="UP000001578">
    <property type="component" value="Chromosome"/>
</dbReference>
<dbReference type="GO" id="GO:0005524">
    <property type="term" value="F:ATP binding"/>
    <property type="evidence" value="ECO:0007669"/>
    <property type="project" value="UniProtKB-KW"/>
</dbReference>
<dbReference type="GO" id="GO:0004781">
    <property type="term" value="F:sulfate adenylyltransferase (ATP) activity"/>
    <property type="evidence" value="ECO:0007669"/>
    <property type="project" value="UniProtKB-UniRule"/>
</dbReference>
<dbReference type="GO" id="GO:0070814">
    <property type="term" value="P:hydrogen sulfide biosynthetic process"/>
    <property type="evidence" value="ECO:0007669"/>
    <property type="project" value="UniProtKB-UniRule"/>
</dbReference>
<dbReference type="GO" id="GO:0000103">
    <property type="term" value="P:sulfate assimilation"/>
    <property type="evidence" value="ECO:0007669"/>
    <property type="project" value="UniProtKB-UniRule"/>
</dbReference>
<dbReference type="CDD" id="cd00517">
    <property type="entry name" value="ATPS"/>
    <property type="match status" value="1"/>
</dbReference>
<dbReference type="Gene3D" id="3.40.50.620">
    <property type="entry name" value="HUPs"/>
    <property type="match status" value="1"/>
</dbReference>
<dbReference type="Gene3D" id="3.10.400.10">
    <property type="entry name" value="Sulfate adenylyltransferase"/>
    <property type="match status" value="1"/>
</dbReference>
<dbReference type="HAMAP" id="MF_00066">
    <property type="entry name" value="Sulf_adenylyltr"/>
    <property type="match status" value="1"/>
</dbReference>
<dbReference type="InterPro" id="IPR025980">
    <property type="entry name" value="ATP-Sase_PUA-like_dom"/>
</dbReference>
<dbReference type="InterPro" id="IPR015947">
    <property type="entry name" value="PUA-like_sf"/>
</dbReference>
<dbReference type="InterPro" id="IPR014729">
    <property type="entry name" value="Rossmann-like_a/b/a_fold"/>
</dbReference>
<dbReference type="InterPro" id="IPR020792">
    <property type="entry name" value="SO4_adenylyltransferase_pro"/>
</dbReference>
<dbReference type="InterPro" id="IPR024951">
    <property type="entry name" value="Sulfurylase_cat_dom"/>
</dbReference>
<dbReference type="InterPro" id="IPR002650">
    <property type="entry name" value="Sulphate_adenylyltransferase"/>
</dbReference>
<dbReference type="NCBIfam" id="NF003166">
    <property type="entry name" value="PRK04149.1"/>
    <property type="match status" value="1"/>
</dbReference>
<dbReference type="NCBIfam" id="TIGR00339">
    <property type="entry name" value="sopT"/>
    <property type="match status" value="1"/>
</dbReference>
<dbReference type="PANTHER" id="PTHR43509">
    <property type="match status" value="1"/>
</dbReference>
<dbReference type="PANTHER" id="PTHR43509:SF1">
    <property type="entry name" value="SULFATE ADENYLYLTRANSFERASE"/>
    <property type="match status" value="1"/>
</dbReference>
<dbReference type="Pfam" id="PF01747">
    <property type="entry name" value="ATP-sulfurylase"/>
    <property type="match status" value="1"/>
</dbReference>
<dbReference type="Pfam" id="PF14306">
    <property type="entry name" value="PUA_2"/>
    <property type="match status" value="1"/>
</dbReference>
<dbReference type="SUPFAM" id="SSF52374">
    <property type="entry name" value="Nucleotidylyl transferase"/>
    <property type="match status" value="1"/>
</dbReference>
<dbReference type="SUPFAM" id="SSF88697">
    <property type="entry name" value="PUA domain-like"/>
    <property type="match status" value="1"/>
</dbReference>
<protein>
    <recommendedName>
        <fullName evidence="1">Sulfate adenylyltransferase</fullName>
        <ecNumber evidence="1">2.7.7.4</ecNumber>
    </recommendedName>
    <alternativeName>
        <fullName evidence="1">ATP-sulfurylase</fullName>
    </alternativeName>
    <alternativeName>
        <fullName evidence="1">Sulfate adenylate transferase</fullName>
        <shortName evidence="1">SAT</shortName>
    </alternativeName>
</protein>
<keyword id="KW-0067">ATP-binding</keyword>
<keyword id="KW-0547">Nucleotide-binding</keyword>
<keyword id="KW-0548">Nucleotidyltransferase</keyword>
<keyword id="KW-0808">Transferase</keyword>
<organism>
    <name type="scientific">Geobacillus thermodenitrificans (strain NG80-2)</name>
    <dbReference type="NCBI Taxonomy" id="420246"/>
    <lineage>
        <taxon>Bacteria</taxon>
        <taxon>Bacillati</taxon>
        <taxon>Bacillota</taxon>
        <taxon>Bacilli</taxon>
        <taxon>Bacillales</taxon>
        <taxon>Anoxybacillaceae</taxon>
        <taxon>Geobacillus</taxon>
    </lineage>
</organism>
<accession>A4IKB5</accession>
<comment type="catalytic activity">
    <reaction evidence="1">
        <text>sulfate + ATP + H(+) = adenosine 5'-phosphosulfate + diphosphate</text>
        <dbReference type="Rhea" id="RHEA:18133"/>
        <dbReference type="ChEBI" id="CHEBI:15378"/>
        <dbReference type="ChEBI" id="CHEBI:16189"/>
        <dbReference type="ChEBI" id="CHEBI:30616"/>
        <dbReference type="ChEBI" id="CHEBI:33019"/>
        <dbReference type="ChEBI" id="CHEBI:58243"/>
        <dbReference type="EC" id="2.7.7.4"/>
    </reaction>
</comment>
<comment type="pathway">
    <text evidence="1">Sulfur metabolism; hydrogen sulfide biosynthesis; sulfite from sulfate: step 1/3.</text>
</comment>
<comment type="similarity">
    <text evidence="1">Belongs to the sulfate adenylyltransferase family.</text>
</comment>
<sequence>MSLSIPHGGTLINRWNPDYPLNEVTKTIELSNAELSDLELIGTGAYSPLTGFLTKADYDAVVETMRLADGTVWSIPITLAVTEEKAKELAIGDKAKLVYGGDVYGVIEIADIYRPDKTKEATLVYKTDELAHPGVRKLFEKPDVYVGGEITLVKRTDKGQFAAFYFDPTETRKRFAELGWNTVVGFQTRNPVHRAHEYIQKCALEIVDGLFLNPLVGETKADDIPADIRMESYQVLLENYYPKDRVFLGVFQAAMRYAGPREAIFHAMVRKNFGCTHFIVGRDHAGVGNYYGTYDAQKIFSNFTAEELGITPLFFEHSFYCTKCEGMASTKTCPHDAEHHVVLSGTKVREMLRNGQVPPSTFSRPEVAAVLIKGLQKREAVTPSAR</sequence>
<gene>
    <name evidence="1" type="primary">sat</name>
    <name type="ordered locus">GTNG_0387</name>
</gene>
<name>SAT_GEOTN</name>
<evidence type="ECO:0000255" key="1">
    <source>
        <dbReference type="HAMAP-Rule" id="MF_00066"/>
    </source>
</evidence>